<sequence length="532" mass="60219">MVIINNLTFNQDYSCVSVSTTKYHKIFNCDPFGEFYSSYQGSSGTKGDKPNDNDKEIIIDKGNGNEYNKIGEDSPTSYLKMLFSTSLTIIIPQNESVGNRLLKIYNLKQNMKICELTFPSHIIDVKLNRKRLCVILESGQIYIYDLSCVRLIKVLEISSFSSKDSEEETHQKLFVGDLGAEDKSLLVLPISNITDQTDLFNTENGVNVTRASDSNILTSLKPLIEFTENKIDKDIITLEDLQKDSNGWVLIYDTIKLKPRLIYKAHDSSLAKITISNDNKKIATASSKGTIIRVCHLESSDDEDVSKPFNISQIINLRRGHNIAKVNCLSFSLDNSILGCGSESNTIHFFRLSKQPHESFEYEEDPANESDPDDEDRSSEDLNQNLANLLISKTPDASAPDQKDSAKSSYFGVLKKKVEGSSRFMNNPYTQTIVRNLPYKNYFENLIWEPPRRAFAYVKLPEYTPPQLFNLHQSKNKVAIGFANTNNNGHLIMLASYQTGQFYHYQLPKPSDQPEPSDSRHECNLIAQYSLL</sequence>
<organism>
    <name type="scientific">Debaryomyces hansenii (strain ATCC 36239 / CBS 767 / BCRC 21394 / JCM 1990 / NBRC 0083 / IGC 2968)</name>
    <name type="common">Yeast</name>
    <name type="synonym">Torulaspora hansenii</name>
    <dbReference type="NCBI Taxonomy" id="284592"/>
    <lineage>
        <taxon>Eukaryota</taxon>
        <taxon>Fungi</taxon>
        <taxon>Dikarya</taxon>
        <taxon>Ascomycota</taxon>
        <taxon>Saccharomycotina</taxon>
        <taxon>Pichiomycetes</taxon>
        <taxon>Debaryomycetaceae</taxon>
        <taxon>Debaryomyces</taxon>
    </lineage>
</organism>
<feature type="chain" id="PRO_0000050878" description="Autophagy-related protein 21">
    <location>
        <begin position="1"/>
        <end position="532"/>
    </location>
</feature>
<feature type="repeat" description="WD 1">
    <location>
        <begin position="265"/>
        <end position="310"/>
    </location>
</feature>
<feature type="repeat" description="WD 2">
    <location>
        <begin position="321"/>
        <end position="360"/>
    </location>
</feature>
<feature type="region of interest" description="Disordered" evidence="3">
    <location>
        <begin position="360"/>
        <end position="380"/>
    </location>
</feature>
<feature type="short sequence motif" description="L/FRRG motif" evidence="2">
    <location>
        <begin position="317"/>
        <end position="321"/>
    </location>
</feature>
<feature type="compositionally biased region" description="Acidic residues" evidence="3">
    <location>
        <begin position="361"/>
        <end position="378"/>
    </location>
</feature>
<evidence type="ECO:0000250" key="1"/>
<evidence type="ECO:0000250" key="2">
    <source>
        <dbReference type="UniProtKB" id="Q02887"/>
    </source>
</evidence>
<evidence type="ECO:0000256" key="3">
    <source>
        <dbReference type="SAM" id="MobiDB-lite"/>
    </source>
</evidence>
<evidence type="ECO:0000305" key="4"/>
<dbReference type="EMBL" id="CR382139">
    <property type="protein sequence ID" value="CAG90556.2"/>
    <property type="molecule type" value="Genomic_DNA"/>
</dbReference>
<dbReference type="RefSeq" id="XP_462070.2">
    <property type="nucleotide sequence ID" value="XM_462070.1"/>
</dbReference>
<dbReference type="SMR" id="Q6BIA1"/>
<dbReference type="FunCoup" id="Q6BIA1">
    <property type="interactions" value="17"/>
</dbReference>
<dbReference type="STRING" id="284592.Q6BIA1"/>
<dbReference type="GeneID" id="2904981"/>
<dbReference type="KEGG" id="dha:DEHA2G12364g"/>
<dbReference type="VEuPathDB" id="FungiDB:DEHA2G12364g"/>
<dbReference type="eggNOG" id="KOG2110">
    <property type="taxonomic scope" value="Eukaryota"/>
</dbReference>
<dbReference type="HOGENOM" id="CLU_025895_5_2_1"/>
<dbReference type="InParanoid" id="Q6BIA1"/>
<dbReference type="OMA" id="MNRKRMC"/>
<dbReference type="OrthoDB" id="1667587at2759"/>
<dbReference type="Proteomes" id="UP000000599">
    <property type="component" value="Chromosome G"/>
</dbReference>
<dbReference type="GO" id="GO:0005774">
    <property type="term" value="C:vacuolar membrane"/>
    <property type="evidence" value="ECO:0007669"/>
    <property type="project" value="UniProtKB-SubCell"/>
</dbReference>
<dbReference type="GO" id="GO:0006914">
    <property type="term" value="P:autophagy"/>
    <property type="evidence" value="ECO:0007669"/>
    <property type="project" value="UniProtKB-KW"/>
</dbReference>
<dbReference type="GO" id="GO:0015031">
    <property type="term" value="P:protein transport"/>
    <property type="evidence" value="ECO:0007669"/>
    <property type="project" value="UniProtKB-KW"/>
</dbReference>
<dbReference type="Gene3D" id="2.130.10.10">
    <property type="entry name" value="YVTN repeat-like/Quinoprotein amine dehydrogenase"/>
    <property type="match status" value="1"/>
</dbReference>
<dbReference type="InterPro" id="IPR048720">
    <property type="entry name" value="PROPPIN"/>
</dbReference>
<dbReference type="InterPro" id="IPR015943">
    <property type="entry name" value="WD40/YVTN_repeat-like_dom_sf"/>
</dbReference>
<dbReference type="InterPro" id="IPR036322">
    <property type="entry name" value="WD40_repeat_dom_sf"/>
</dbReference>
<dbReference type="InterPro" id="IPR001680">
    <property type="entry name" value="WD40_rpt"/>
</dbReference>
<dbReference type="PANTHER" id="PTHR11227">
    <property type="entry name" value="WD-REPEAT PROTEIN INTERACTING WITH PHOSPHOINOSIDES WIPI -RELATED"/>
    <property type="match status" value="1"/>
</dbReference>
<dbReference type="Pfam" id="PF21032">
    <property type="entry name" value="PROPPIN"/>
    <property type="match status" value="2"/>
</dbReference>
<dbReference type="SMART" id="SM00320">
    <property type="entry name" value="WD40"/>
    <property type="match status" value="2"/>
</dbReference>
<dbReference type="SUPFAM" id="SSF50978">
    <property type="entry name" value="WD40 repeat-like"/>
    <property type="match status" value="1"/>
</dbReference>
<reference key="1">
    <citation type="journal article" date="2004" name="Nature">
        <title>Genome evolution in yeasts.</title>
        <authorList>
            <person name="Dujon B."/>
            <person name="Sherman D."/>
            <person name="Fischer G."/>
            <person name="Durrens P."/>
            <person name="Casaregola S."/>
            <person name="Lafontaine I."/>
            <person name="de Montigny J."/>
            <person name="Marck C."/>
            <person name="Neuveglise C."/>
            <person name="Talla E."/>
            <person name="Goffard N."/>
            <person name="Frangeul L."/>
            <person name="Aigle M."/>
            <person name="Anthouard V."/>
            <person name="Babour A."/>
            <person name="Barbe V."/>
            <person name="Barnay S."/>
            <person name="Blanchin S."/>
            <person name="Beckerich J.-M."/>
            <person name="Beyne E."/>
            <person name="Bleykasten C."/>
            <person name="Boisrame A."/>
            <person name="Boyer J."/>
            <person name="Cattolico L."/>
            <person name="Confanioleri F."/>
            <person name="de Daruvar A."/>
            <person name="Despons L."/>
            <person name="Fabre E."/>
            <person name="Fairhead C."/>
            <person name="Ferry-Dumazet H."/>
            <person name="Groppi A."/>
            <person name="Hantraye F."/>
            <person name="Hennequin C."/>
            <person name="Jauniaux N."/>
            <person name="Joyet P."/>
            <person name="Kachouri R."/>
            <person name="Kerrest A."/>
            <person name="Koszul R."/>
            <person name="Lemaire M."/>
            <person name="Lesur I."/>
            <person name="Ma L."/>
            <person name="Muller H."/>
            <person name="Nicaud J.-M."/>
            <person name="Nikolski M."/>
            <person name="Oztas S."/>
            <person name="Ozier-Kalogeropoulos O."/>
            <person name="Pellenz S."/>
            <person name="Potier S."/>
            <person name="Richard G.-F."/>
            <person name="Straub M.-L."/>
            <person name="Suleau A."/>
            <person name="Swennen D."/>
            <person name="Tekaia F."/>
            <person name="Wesolowski-Louvel M."/>
            <person name="Westhof E."/>
            <person name="Wirth B."/>
            <person name="Zeniou-Meyer M."/>
            <person name="Zivanovic Y."/>
            <person name="Bolotin-Fukuhara M."/>
            <person name="Thierry A."/>
            <person name="Bouchier C."/>
            <person name="Caudron B."/>
            <person name="Scarpelli C."/>
            <person name="Gaillardin C."/>
            <person name="Weissenbach J."/>
            <person name="Wincker P."/>
            <person name="Souciet J.-L."/>
        </authorList>
    </citation>
    <scope>NUCLEOTIDE SEQUENCE [LARGE SCALE GENOMIC DNA]</scope>
    <source>
        <strain>ATCC 36239 / CBS 767 / BCRC 21394 / JCM 1990 / NBRC 0083 / IGC 2968</strain>
    </source>
</reference>
<proteinExistence type="inferred from homology"/>
<accession>Q6BIA1</accession>
<comment type="function">
    <text evidence="1">Required for cytoplasm to vacuole transport (Cvt) vesicles formation and mitophagy. Involved in binding of phosphatidylethanolamine to ATG8 and in recruitment of ATG8 and ATG5 to the pre-autophagosomal structure. Protects ATG8 from ARG4-mediated cleavage (By similarity).</text>
</comment>
<comment type="subcellular location">
    <subcellularLocation>
        <location evidence="1">Cytoplasm</location>
    </subcellularLocation>
    <subcellularLocation>
        <location evidence="1">Membrane</location>
        <topology evidence="1">Peripheral membrane protein</topology>
    </subcellularLocation>
    <subcellularLocation>
        <location evidence="1">Vacuole membrane</location>
        <topology evidence="1">Peripheral membrane protein</topology>
    </subcellularLocation>
    <text evidence="1">Vacuolar and perivacuolar punctate structures.</text>
</comment>
<comment type="domain">
    <text evidence="1">Contains a beta-propeller domain involved in specific binding to phosphatidylinositol 3,5-bisphosphate (PIP2).</text>
</comment>
<comment type="domain">
    <text evidence="2">The L/FRRG motif is essential for the cytoplasm to vacuole transport (Cvt) pathway and for the recruitment of ATG8 and ATG16 to the PAS in nutrient-rich medium and in both its recruitment to and dissociation from the PAS under starvation conditions.</text>
</comment>
<comment type="similarity">
    <text evidence="4">Belongs to the WD repeat PROPPIN family.</text>
</comment>
<name>ATG21_DEBHA</name>
<protein>
    <recommendedName>
        <fullName>Autophagy-related protein 21</fullName>
    </recommendedName>
</protein>
<gene>
    <name type="primary">ATG21</name>
    <name type="ordered locus">DEHA2G12364g</name>
</gene>
<keyword id="KW-0072">Autophagy</keyword>
<keyword id="KW-0963">Cytoplasm</keyword>
<keyword id="KW-0472">Membrane</keyword>
<keyword id="KW-0653">Protein transport</keyword>
<keyword id="KW-1185">Reference proteome</keyword>
<keyword id="KW-0677">Repeat</keyword>
<keyword id="KW-0813">Transport</keyword>
<keyword id="KW-0926">Vacuole</keyword>
<keyword id="KW-0853">WD repeat</keyword>